<gene>
    <name type="primary">yqjH</name>
    <name type="ordered locus">b3070</name>
    <name type="ordered locus">JW3041</name>
</gene>
<dbReference type="EC" id="1.16.1.9"/>
<dbReference type="EMBL" id="U28379">
    <property type="protein sequence ID" value="AAA89149.1"/>
    <property type="molecule type" value="Genomic_DNA"/>
</dbReference>
<dbReference type="EMBL" id="U00096">
    <property type="protein sequence ID" value="AAC76105.1"/>
    <property type="molecule type" value="Genomic_DNA"/>
</dbReference>
<dbReference type="EMBL" id="AP009048">
    <property type="protein sequence ID" value="BAE77120.1"/>
    <property type="molecule type" value="Genomic_DNA"/>
</dbReference>
<dbReference type="PIR" id="C65095">
    <property type="entry name" value="C65095"/>
</dbReference>
<dbReference type="RefSeq" id="NP_417541.1">
    <property type="nucleotide sequence ID" value="NC_000913.3"/>
</dbReference>
<dbReference type="RefSeq" id="WP_001066494.1">
    <property type="nucleotide sequence ID" value="NZ_LN832404.1"/>
</dbReference>
<dbReference type="SMR" id="Q46871"/>
<dbReference type="BioGRID" id="4259593">
    <property type="interactions" value="19"/>
</dbReference>
<dbReference type="BioGRID" id="851898">
    <property type="interactions" value="1"/>
</dbReference>
<dbReference type="FunCoup" id="Q46871">
    <property type="interactions" value="22"/>
</dbReference>
<dbReference type="IntAct" id="Q46871">
    <property type="interactions" value="3"/>
</dbReference>
<dbReference type="STRING" id="511145.b3070"/>
<dbReference type="PaxDb" id="511145-b3070"/>
<dbReference type="EnsemblBacteria" id="AAC76105">
    <property type="protein sequence ID" value="AAC76105"/>
    <property type="gene ID" value="b3070"/>
</dbReference>
<dbReference type="GeneID" id="947582"/>
<dbReference type="KEGG" id="ecj:JW3041"/>
<dbReference type="KEGG" id="eco:b3070"/>
<dbReference type="KEGG" id="ecoc:C3026_16770"/>
<dbReference type="PATRIC" id="fig|511145.12.peg.3164"/>
<dbReference type="EchoBASE" id="EB2787"/>
<dbReference type="eggNOG" id="COG2375">
    <property type="taxonomic scope" value="Bacteria"/>
</dbReference>
<dbReference type="HOGENOM" id="CLU_040923_4_0_6"/>
<dbReference type="InParanoid" id="Q46871"/>
<dbReference type="OMA" id="VTYPEPF"/>
<dbReference type="OrthoDB" id="9814826at2"/>
<dbReference type="PhylomeDB" id="Q46871"/>
<dbReference type="BioCyc" id="EcoCyc:G7593-MONOMER"/>
<dbReference type="BioCyc" id="MetaCyc:G7593-MONOMER"/>
<dbReference type="SABIO-RK" id="Q46871"/>
<dbReference type="PRO" id="PR:Q46871"/>
<dbReference type="Proteomes" id="UP000000625">
    <property type="component" value="Chromosome"/>
</dbReference>
<dbReference type="GO" id="GO:0005829">
    <property type="term" value="C:cytosol"/>
    <property type="evidence" value="ECO:0000314"/>
    <property type="project" value="EcoCyc"/>
</dbReference>
<dbReference type="GO" id="GO:0071949">
    <property type="term" value="F:FAD binding"/>
    <property type="evidence" value="ECO:0000314"/>
    <property type="project" value="EcoCyc"/>
</dbReference>
<dbReference type="GO" id="GO:0052851">
    <property type="term" value="F:ferric-chelate reductase (NADPH) activity"/>
    <property type="evidence" value="ECO:0000314"/>
    <property type="project" value="UniProtKB"/>
</dbReference>
<dbReference type="GO" id="GO:0050660">
    <property type="term" value="F:flavin adenine dinucleotide binding"/>
    <property type="evidence" value="ECO:0000314"/>
    <property type="project" value="EcoCyc"/>
</dbReference>
<dbReference type="GO" id="GO:0010106">
    <property type="term" value="P:cellular response to iron ion starvation"/>
    <property type="evidence" value="ECO:0000318"/>
    <property type="project" value="GO_Central"/>
</dbReference>
<dbReference type="GO" id="GO:0071289">
    <property type="term" value="P:cellular response to nickel ion"/>
    <property type="evidence" value="ECO:0000315"/>
    <property type="project" value="EcoCyc"/>
</dbReference>
<dbReference type="GO" id="GO:0033212">
    <property type="term" value="P:iron import into cell"/>
    <property type="evidence" value="ECO:0000318"/>
    <property type="project" value="GO_Central"/>
</dbReference>
<dbReference type="GO" id="GO:0015891">
    <property type="term" value="P:siderophore transport"/>
    <property type="evidence" value="ECO:0000318"/>
    <property type="project" value="GO_Central"/>
</dbReference>
<dbReference type="GO" id="GO:0033214">
    <property type="term" value="P:siderophore-dependent iron import into cell"/>
    <property type="evidence" value="ECO:0000315"/>
    <property type="project" value="EcoCyc"/>
</dbReference>
<dbReference type="CDD" id="cd06193">
    <property type="entry name" value="siderophore_interacting"/>
    <property type="match status" value="1"/>
</dbReference>
<dbReference type="FunFam" id="2.40.30.10:FF:000055">
    <property type="entry name" value="Siderophore-interacting family protein"/>
    <property type="match status" value="1"/>
</dbReference>
<dbReference type="FunFam" id="3.40.50.80:FF:000022">
    <property type="entry name" value="Siderophore-interacting family protein"/>
    <property type="match status" value="1"/>
</dbReference>
<dbReference type="Gene3D" id="3.40.50.80">
    <property type="entry name" value="Nucleotide-binding domain of ferredoxin-NADP reductase (FNR) module"/>
    <property type="match status" value="1"/>
</dbReference>
<dbReference type="Gene3D" id="2.40.30.10">
    <property type="entry name" value="Translation factors"/>
    <property type="match status" value="1"/>
</dbReference>
<dbReference type="InterPro" id="IPR013113">
    <property type="entry name" value="FAD-bd_9_SIP"/>
</dbReference>
<dbReference type="InterPro" id="IPR017927">
    <property type="entry name" value="FAD-bd_FR_type"/>
</dbReference>
<dbReference type="InterPro" id="IPR039261">
    <property type="entry name" value="FNR_nucleotide-bd"/>
</dbReference>
<dbReference type="InterPro" id="IPR017938">
    <property type="entry name" value="Riboflavin_synthase-like_b-brl"/>
</dbReference>
<dbReference type="InterPro" id="IPR007037">
    <property type="entry name" value="SIP_C"/>
</dbReference>
<dbReference type="InterPro" id="IPR039374">
    <property type="entry name" value="SIP_fam"/>
</dbReference>
<dbReference type="PANTHER" id="PTHR30157">
    <property type="entry name" value="FERRIC REDUCTASE, NADPH-DEPENDENT"/>
    <property type="match status" value="1"/>
</dbReference>
<dbReference type="PANTHER" id="PTHR30157:SF0">
    <property type="entry name" value="NADPH-DEPENDENT FERRIC-CHELATE REDUCTASE"/>
    <property type="match status" value="1"/>
</dbReference>
<dbReference type="Pfam" id="PF08021">
    <property type="entry name" value="FAD_binding_9"/>
    <property type="match status" value="1"/>
</dbReference>
<dbReference type="Pfam" id="PF04954">
    <property type="entry name" value="SIP"/>
    <property type="match status" value="1"/>
</dbReference>
<dbReference type="SUPFAM" id="SSF63380">
    <property type="entry name" value="Riboflavin synthase domain-like"/>
    <property type="match status" value="1"/>
</dbReference>
<dbReference type="PROSITE" id="PS51384">
    <property type="entry name" value="FAD_FR"/>
    <property type="match status" value="1"/>
</dbReference>
<accession>Q46871</accession>
<accession>Q2M9D6</accession>
<keyword id="KW-0963">Cytoplasm</keyword>
<keyword id="KW-0274">FAD</keyword>
<keyword id="KW-0285">Flavoprotein</keyword>
<keyword id="KW-0521">NADP</keyword>
<keyword id="KW-0560">Oxidoreductase</keyword>
<keyword id="KW-1185">Reference proteome</keyword>
<evidence type="ECO:0000255" key="1">
    <source>
        <dbReference type="PROSITE-ProRule" id="PRU00716"/>
    </source>
</evidence>
<evidence type="ECO:0000269" key="2">
    <source>
    </source>
</evidence>
<evidence type="ECO:0000305" key="3"/>
<organism>
    <name type="scientific">Escherichia coli (strain K12)</name>
    <dbReference type="NCBI Taxonomy" id="83333"/>
    <lineage>
        <taxon>Bacteria</taxon>
        <taxon>Pseudomonadati</taxon>
        <taxon>Pseudomonadota</taxon>
        <taxon>Gammaproteobacteria</taxon>
        <taxon>Enterobacterales</taxon>
        <taxon>Enterobacteriaceae</taxon>
        <taxon>Escherichia</taxon>
    </lineage>
</organism>
<feature type="chain" id="PRO_0000169437" description="NADPH-dependent ferric-chelate reductase">
    <location>
        <begin position="1"/>
        <end position="254"/>
    </location>
</feature>
<feature type="domain" description="FAD-binding FR-type" evidence="1">
    <location>
        <begin position="15"/>
        <end position="136"/>
    </location>
</feature>
<comment type="function">
    <text evidence="2">Plays a role in iron homeostasis under excess nickel conditions.</text>
</comment>
<comment type="catalytic activity">
    <reaction evidence="2">
        <text>2 a Fe(II)-siderophore + NADP(+) + H(+) = 2 a Fe(III)-siderophore + NADPH</text>
        <dbReference type="Rhea" id="RHEA:28795"/>
        <dbReference type="Rhea" id="RHEA-COMP:11342"/>
        <dbReference type="Rhea" id="RHEA-COMP:11344"/>
        <dbReference type="ChEBI" id="CHEBI:15378"/>
        <dbReference type="ChEBI" id="CHEBI:29033"/>
        <dbReference type="ChEBI" id="CHEBI:29034"/>
        <dbReference type="ChEBI" id="CHEBI:57783"/>
        <dbReference type="ChEBI" id="CHEBI:58349"/>
        <dbReference type="EC" id="1.16.1.9"/>
    </reaction>
</comment>
<comment type="biophysicochemical properties">
    <kinetics>
        <KM evidence="2">33 uM for ferric ions (anaerobically at pH 7.5)</KM>
        <KM evidence="2">43 uM for NADPH (anaerobically at pH 7.5)</KM>
    </kinetics>
</comment>
<comment type="subcellular location">
    <subcellularLocation>
        <location evidence="3">Cytoplasm</location>
    </subcellularLocation>
</comment>
<comment type="induction">
    <text evidence="2">Repressed by YqjI and Fur. YqjI is required for nickel-dependent regulation of yqjH, while Fur is required for iron- and cobalt-dependent regulation of yqjH.</text>
</comment>
<comment type="disruption phenotype">
    <text evidence="2">Inactivation leads to ferrous iron chelator resistance as the wild-type.</text>
</comment>
<comment type="similarity">
    <text evidence="3">Belongs to the SIP oxidoreductase family.</text>
</comment>
<sequence>MNNTPRYPQRVRNDLRFRELTVLRVERISAGFQRIVLGGEALDGFTSRGFDDHSKLFFPQPDAHFVPPTVTEEGIVWPEGPRPPSRDYTPLYDELRHELAIDFFIHDGGVASGWAMQAQPGDKLTVAGPRGSLVVPEDYAYQLYVCDESGMPALRRRLETLSKLAVKPQVSALVSVRDNACQDYLAHLDGFNIEWLAHDEQAVDARLAQMQIPADDYFIWITGEGKVVKNLSRRFEAEQYDPQRVRAAAYWHAK</sequence>
<reference key="1">
    <citation type="journal article" date="1997" name="Science">
        <title>The complete genome sequence of Escherichia coli K-12.</title>
        <authorList>
            <person name="Blattner F.R."/>
            <person name="Plunkett G. III"/>
            <person name="Bloch C.A."/>
            <person name="Perna N.T."/>
            <person name="Burland V."/>
            <person name="Riley M."/>
            <person name="Collado-Vides J."/>
            <person name="Glasner J.D."/>
            <person name="Rode C.K."/>
            <person name="Mayhew G.F."/>
            <person name="Gregor J."/>
            <person name="Davis N.W."/>
            <person name="Kirkpatrick H.A."/>
            <person name="Goeden M.A."/>
            <person name="Rose D.J."/>
            <person name="Mau B."/>
            <person name="Shao Y."/>
        </authorList>
    </citation>
    <scope>NUCLEOTIDE SEQUENCE [LARGE SCALE GENOMIC DNA]</scope>
    <source>
        <strain>K12 / MG1655 / ATCC 47076</strain>
    </source>
</reference>
<reference key="2">
    <citation type="journal article" date="2006" name="Mol. Syst. Biol.">
        <title>Highly accurate genome sequences of Escherichia coli K-12 strains MG1655 and W3110.</title>
        <authorList>
            <person name="Hayashi K."/>
            <person name="Morooka N."/>
            <person name="Yamamoto Y."/>
            <person name="Fujita K."/>
            <person name="Isono K."/>
            <person name="Choi S."/>
            <person name="Ohtsubo E."/>
            <person name="Baba T."/>
            <person name="Wanner B.L."/>
            <person name="Mori H."/>
            <person name="Horiuchi T."/>
        </authorList>
    </citation>
    <scope>NUCLEOTIDE SEQUENCE [LARGE SCALE GENOMIC DNA]</scope>
    <source>
        <strain>K12 / W3110 / ATCC 27325 / DSM 5911</strain>
    </source>
</reference>
<reference key="3">
    <citation type="journal article" date="2008" name="Acta Crystallogr. F">
        <title>Preliminary X-ray diffraction analysis of YqjH from Escherichia coli: a putative cytoplasmic ferri-siderophore reductase.</title>
        <authorList>
            <person name="Bamford V.A."/>
            <person name="Armour M."/>
            <person name="Mitchell S.A."/>
            <person name="Cartron M."/>
            <person name="Andrews S.C."/>
            <person name="Watson K.A."/>
        </authorList>
    </citation>
    <scope>IDENTIFICATION BY MASS SPECTROMETRY</scope>
    <source>
        <strain>K12 / MG1655 / ATCC 47076</strain>
    </source>
</reference>
<reference key="4">
    <citation type="journal article" date="2011" name="J. Bacteriol.">
        <title>Fur and the novel regulator YqjI control transcription of the ferric reductase gene yqjH in Escherichia coli.</title>
        <authorList>
            <person name="Wang S."/>
            <person name="Wu Y."/>
            <person name="Outten F.W."/>
        </authorList>
    </citation>
    <scope>FUNCTION AS A FERRIC SIDEROPHORE REDUCTASE AND IN THE IRON HOMEOSTASIS</scope>
    <scope>CATALYTIC ACTIVITY</scope>
    <scope>DISRUPTION PHENOTYPE</scope>
    <scope>BIOPHYSICOCHEMICAL PROPERTIES</scope>
    <scope>INDUCTION</scope>
    <source>
        <strain>K12 / MG1655 / ATCC 47076</strain>
    </source>
</reference>
<protein>
    <recommendedName>
        <fullName>NADPH-dependent ferric-chelate reductase</fullName>
        <ecNumber>1.16.1.9</ecNumber>
    </recommendedName>
    <alternativeName>
        <fullName>Ferric siderophore reductase</fullName>
    </alternativeName>
</protein>
<name>YQJH_ECOLI</name>
<proteinExistence type="evidence at protein level"/>